<gene>
    <name evidence="5" type="primary">hpf1</name>
    <name evidence="6" type="ORF">zgc:101819</name>
</gene>
<evidence type="ECO:0000250" key="1">
    <source>
        <dbReference type="UniProtKB" id="Q9NWY4"/>
    </source>
</evidence>
<evidence type="ECO:0000255" key="2"/>
<evidence type="ECO:0000256" key="3">
    <source>
        <dbReference type="SAM" id="MobiDB-lite"/>
    </source>
</evidence>
<evidence type="ECO:0000269" key="4">
    <source>
    </source>
</evidence>
<evidence type="ECO:0000303" key="5">
    <source>
    </source>
</evidence>
<evidence type="ECO:0000303" key="6">
    <source ref="1"/>
</evidence>
<evidence type="ECO:0000305" key="7"/>
<dbReference type="EMBL" id="BC055260">
    <property type="protein sequence ID" value="AAH55260.1"/>
    <property type="status" value="ALT_INIT"/>
    <property type="molecule type" value="mRNA"/>
</dbReference>
<dbReference type="EMBL" id="BC083292">
    <property type="protein sequence ID" value="AAH83292.1"/>
    <property type="molecule type" value="mRNA"/>
</dbReference>
<dbReference type="EMBL" id="BC155158">
    <property type="protein sequence ID" value="AAI55159.1"/>
    <property type="status" value="ALT_INIT"/>
    <property type="molecule type" value="mRNA"/>
</dbReference>
<dbReference type="RefSeq" id="NP_001005769.1">
    <property type="nucleotide sequence ID" value="NM_001005769.1"/>
</dbReference>
<dbReference type="SMR" id="Q7SXS8"/>
<dbReference type="FunCoup" id="Q7SXS8">
    <property type="interactions" value="1680"/>
</dbReference>
<dbReference type="STRING" id="7955.ENSDARP00000074168"/>
<dbReference type="PaxDb" id="7955-ENSDARP00000074168"/>
<dbReference type="GeneID" id="100002184"/>
<dbReference type="KEGG" id="dre:100002184"/>
<dbReference type="AGR" id="ZFIN:ZDB-GENE-030131-740"/>
<dbReference type="CTD" id="54969"/>
<dbReference type="ZFIN" id="ZDB-GENE-030131-740">
    <property type="gene designation" value="hpf1"/>
</dbReference>
<dbReference type="eggNOG" id="KOG3952">
    <property type="taxonomic scope" value="Eukaryota"/>
</dbReference>
<dbReference type="InParanoid" id="Q7SXS8"/>
<dbReference type="OrthoDB" id="416496at2759"/>
<dbReference type="PhylomeDB" id="Q7SXS8"/>
<dbReference type="PRO" id="PR:Q7SXS8"/>
<dbReference type="Proteomes" id="UP000000437">
    <property type="component" value="Alternate scaffold 1"/>
</dbReference>
<dbReference type="Proteomes" id="UP000000437">
    <property type="component" value="Chromosome 1"/>
</dbReference>
<dbReference type="GO" id="GO:0000785">
    <property type="term" value="C:chromatin"/>
    <property type="evidence" value="ECO:0000250"/>
    <property type="project" value="UniProtKB"/>
</dbReference>
<dbReference type="GO" id="GO:0005634">
    <property type="term" value="C:nucleus"/>
    <property type="evidence" value="ECO:0000250"/>
    <property type="project" value="UniProtKB"/>
</dbReference>
<dbReference type="GO" id="GO:0090734">
    <property type="term" value="C:site of DNA damage"/>
    <property type="evidence" value="ECO:0000250"/>
    <property type="project" value="UniProtKB"/>
</dbReference>
<dbReference type="GO" id="GO:0003682">
    <property type="term" value="F:chromatin binding"/>
    <property type="evidence" value="ECO:0000250"/>
    <property type="project" value="UniProtKB"/>
</dbReference>
<dbReference type="GO" id="GO:0042393">
    <property type="term" value="F:histone binding"/>
    <property type="evidence" value="ECO:0000318"/>
    <property type="project" value="GO_Central"/>
</dbReference>
<dbReference type="GO" id="GO:0072572">
    <property type="term" value="F:poly-ADP-D-ribose binding"/>
    <property type="evidence" value="ECO:0000318"/>
    <property type="project" value="GO_Central"/>
</dbReference>
<dbReference type="GO" id="GO:0140768">
    <property type="term" value="F:protein ADP-ribosyltransferase-substrate adaptor activity"/>
    <property type="evidence" value="ECO:0000250"/>
    <property type="project" value="UniProtKB"/>
</dbReference>
<dbReference type="GO" id="GO:0006974">
    <property type="term" value="P:DNA damage response"/>
    <property type="evidence" value="ECO:0000250"/>
    <property type="project" value="UniProtKB"/>
</dbReference>
<dbReference type="GO" id="GO:0140861">
    <property type="term" value="P:DNA repair-dependent chromatin remodeling"/>
    <property type="evidence" value="ECO:0000250"/>
    <property type="project" value="UniProtKB"/>
</dbReference>
<dbReference type="GO" id="GO:0006302">
    <property type="term" value="P:double-strand break repair"/>
    <property type="evidence" value="ECO:0000318"/>
    <property type="project" value="GO_Central"/>
</dbReference>
<dbReference type="InterPro" id="IPR019361">
    <property type="entry name" value="HPF1"/>
</dbReference>
<dbReference type="PANTHER" id="PTHR13386">
    <property type="entry name" value="HISTONE PARYLATION FACTOR 1"/>
    <property type="match status" value="1"/>
</dbReference>
<dbReference type="PANTHER" id="PTHR13386:SF1">
    <property type="entry name" value="HISTONE PARYLATION FACTOR 1"/>
    <property type="match status" value="1"/>
</dbReference>
<dbReference type="Pfam" id="PF10228">
    <property type="entry name" value="HPF1"/>
    <property type="match status" value="1"/>
</dbReference>
<accession>Q7SXS8</accession>
<accession>A9JT12</accession>
<accession>Q5XJK8</accession>
<keyword id="KW-0158">Chromosome</keyword>
<keyword id="KW-0175">Coiled coil</keyword>
<keyword id="KW-0227">DNA damage</keyword>
<keyword id="KW-0234">DNA repair</keyword>
<keyword id="KW-0539">Nucleus</keyword>
<keyword id="KW-1185">Reference proteome</keyword>
<sequence length="348" mass="39935">MAGRGKRKPRSLPQTETPNGEVKKAKEGLKDDKTSVGEEMREEVERLYKLRMPDDFFQFWDFCEGLNADCPQDALKNTLGLQLVGPFDILSKKHKNSSSQPNFHLHWRYFYDPPEFQTIIQGNADTQHHMGYFRDLPDALPVFIGENEAKKGYTITQLGDNIFAAVLLFLQKKKKEKRQQKDDAALNRLEEDLKREAERLGLPLEQKTKSMKQRERKVVTKTFHGAGIVVPVDKNDVGYRELPESDASLKKICKAIAEAKDDEERMKAFAPIQEMITFVQFANDECDYGMGYELGIDLFCYGSHYFFKVVRQLLPMAYNLLKRGLFGEILEAHLASRSQDNLDQLAAV</sequence>
<reference key="1">
    <citation type="submission" date="2007-11" db="EMBL/GenBank/DDBJ databases">
        <authorList>
            <consortium name="NIH - Zebrafish Gene Collection (ZGC) project"/>
        </authorList>
    </citation>
    <scope>NUCLEOTIDE SEQUENCE [LARGE SCALE MRNA]</scope>
    <source>
        <strain>AB</strain>
        <tissue>Olfactory epithelium</tissue>
        <tissue>Ovary</tissue>
    </source>
</reference>
<reference key="2">
    <citation type="journal article" date="2018" name="Dev. Genes Evol.">
        <title>Analysis of hpf1 expression and function in early embryonic development of zebrafish.</title>
        <authorList>
            <person name="Zhang Z."/>
            <person name="Sun H."/>
            <person name="Chen Y."/>
            <person name="Cao T."/>
            <person name="Songyang Z."/>
            <person name="Huang J."/>
            <person name="Huang Y."/>
        </authorList>
    </citation>
    <scope>TISSUE SPECIFICITY</scope>
    <scope>DEVELOPMENTAL STAGE</scope>
    <scope>DISRUPTION PHENOTYPE</scope>
</reference>
<comment type="function">
    <text evidence="1">Cofactor for serine ADP-ribosylation that confers serine specificity on parp1 and parp2 and plays a key role in DNA damage response. Initiates the repair of double-strand DNA breaks: recruited to DNA damage sites by parp1 and parp2 and switches the amino acid specificity of parp1 and parp2 from aspartate or glutamate to serine residues, licensing serine ADP-ribosylation of target proteins. Serine ADP-ribosylation of target proteins, such as histones, promotes decompaction of chromatin and the recruitment of repair factors leading to the reparation of DNA strand breaks. Serine ADP-ribosylation of proteins constitutes the primary form of ADP-ribosylation of proteins in response to DNA damage. Hpf1 acts by completing the active site of parp1 and parp2: forms a composite active site composed of residues from Hpf1 and parp1 or parp2. While hpf1 promotes the initiation of serine ADP-ribosylation, it restricts the polymerase activity of parp1 and parp2 in order to limit the length of poly-ADP-ribose chains. Hpf1 also promotes tyrosine ADP-ribosylation, probably by conferring tyrosine specificity on parp1.</text>
</comment>
<comment type="subunit">
    <text evidence="1">Interacts with PARP1 (via the PARP catalytic domain). Interacts with PARP2 (via the PARP catalytic domain). Interacts with core nucleosomes in a parp1- and parp2-dependent manner.</text>
</comment>
<comment type="subcellular location">
    <subcellularLocation>
        <location evidence="1">Chromosome</location>
    </subcellularLocation>
    <subcellularLocation>
        <location evidence="1">Nucleus</location>
    </subcellularLocation>
    <text evidence="1">Localizes to DNA damage sites; chromatin localization is dependent on parp1 and parp2.</text>
</comment>
<comment type="tissue specificity">
    <text evidence="4">In adult, mainly expressed in gonads.</text>
</comment>
<comment type="developmental stage">
    <text evidence="4">Expressed maternally: detected as early as 0 hour post-fertilization (hpf), before zygotic expression transcripts starts.</text>
</comment>
<comment type="disruption phenotype">
    <text evidence="4">Morpholino knockdown of the protein causes malformation anbd delayed hatching.</text>
</comment>
<comment type="similarity">
    <text evidence="7">Belongs to the HPF1 family.</text>
</comment>
<comment type="sequence caution" evidence="7">
    <conflict type="erroneous initiation">
        <sequence resource="EMBL-CDS" id="AAH55260"/>
    </conflict>
</comment>
<comment type="sequence caution" evidence="7">
    <conflict type="erroneous initiation">
        <sequence resource="EMBL-CDS" id="AAI55159"/>
    </conflict>
</comment>
<feature type="chain" id="PRO_0000342625" description="Histone PARylation factor 1">
    <location>
        <begin position="1"/>
        <end position="348"/>
    </location>
</feature>
<feature type="region of interest" description="Disordered" evidence="3">
    <location>
        <begin position="1"/>
        <end position="38"/>
    </location>
</feature>
<feature type="coiled-coil region" evidence="2">
    <location>
        <begin position="170"/>
        <end position="200"/>
    </location>
</feature>
<feature type="compositionally biased region" description="Basic residues" evidence="3">
    <location>
        <begin position="1"/>
        <end position="10"/>
    </location>
</feature>
<feature type="compositionally biased region" description="Basic and acidic residues" evidence="3">
    <location>
        <begin position="21"/>
        <end position="38"/>
    </location>
</feature>
<feature type="active site" description="Proton donor" evidence="1">
    <location>
        <position position="285"/>
    </location>
</feature>
<feature type="sequence conflict" description="In Ref. 1; AAH83292." evidence="7" ref="1">
    <original>P</original>
    <variation>S</variation>
    <location>
        <position position="9"/>
    </location>
</feature>
<feature type="sequence conflict" description="In Ref. 1; AAH55260/AAH83292." evidence="7" ref="1">
    <original>K</original>
    <variation>E</variation>
    <location>
        <position position="30"/>
    </location>
</feature>
<feature type="sequence conflict" description="In Ref. 1; AAI55159." evidence="7" ref="1">
    <original>K</original>
    <variation>R</variation>
    <location>
        <position position="33"/>
    </location>
</feature>
<feature type="sequence conflict" description="In Ref. 1; AAH83292." evidence="7" ref="1">
    <original>L</original>
    <variation>P</variation>
    <location>
        <position position="66"/>
    </location>
</feature>
<feature type="sequence conflict" description="In Ref. 1; AAH83292/AAI55159." evidence="7" ref="1">
    <original>N</original>
    <variation>K</variation>
    <location>
        <position position="77"/>
    </location>
</feature>
<feature type="sequence conflict" description="In Ref. 1; AAI55159." evidence="7" ref="1">
    <original>N</original>
    <variation>S</variation>
    <location>
        <position position="96"/>
    </location>
</feature>
<feature type="sequence conflict" description="In Ref. 1; AAI55159." evidence="7" ref="1">
    <original>Q</original>
    <variation>H</variation>
    <location>
        <position position="171"/>
    </location>
</feature>
<feature type="sequence conflict" description="In Ref. 1; AAH83292." evidence="7" ref="1">
    <original>A</original>
    <variation>T</variation>
    <location>
        <position position="184"/>
    </location>
</feature>
<feature type="sequence conflict" description="In Ref. 1; AAH83292." evidence="7" ref="1">
    <original>L</original>
    <variation>S</variation>
    <location>
        <position position="320"/>
    </location>
</feature>
<protein>
    <recommendedName>
        <fullName evidence="1">Histone PARylation factor 1</fullName>
    </recommendedName>
</protein>
<name>HPF1_DANRE</name>
<organism>
    <name type="scientific">Danio rerio</name>
    <name type="common">Zebrafish</name>
    <name type="synonym">Brachydanio rerio</name>
    <dbReference type="NCBI Taxonomy" id="7955"/>
    <lineage>
        <taxon>Eukaryota</taxon>
        <taxon>Metazoa</taxon>
        <taxon>Chordata</taxon>
        <taxon>Craniata</taxon>
        <taxon>Vertebrata</taxon>
        <taxon>Euteleostomi</taxon>
        <taxon>Actinopterygii</taxon>
        <taxon>Neopterygii</taxon>
        <taxon>Teleostei</taxon>
        <taxon>Ostariophysi</taxon>
        <taxon>Cypriniformes</taxon>
        <taxon>Danionidae</taxon>
        <taxon>Danioninae</taxon>
        <taxon>Danio</taxon>
    </lineage>
</organism>
<proteinExistence type="evidence at transcript level"/>